<dbReference type="EC" id="7.5.2.4" evidence="1"/>
<dbReference type="EMBL" id="CP000416">
    <property type="protein sequence ID" value="ABJ63837.1"/>
    <property type="molecule type" value="Genomic_DNA"/>
</dbReference>
<dbReference type="RefSeq" id="WP_011667469.1">
    <property type="nucleotide sequence ID" value="NC_008497.1"/>
</dbReference>
<dbReference type="SMR" id="Q03SI5"/>
<dbReference type="STRING" id="387344.LVIS_0694"/>
<dbReference type="KEGG" id="lbr:LVIS_0694"/>
<dbReference type="eggNOG" id="COG1134">
    <property type="taxonomic scope" value="Bacteria"/>
</dbReference>
<dbReference type="HOGENOM" id="CLU_000604_101_8_9"/>
<dbReference type="Proteomes" id="UP000001652">
    <property type="component" value="Chromosome"/>
</dbReference>
<dbReference type="GO" id="GO:0005886">
    <property type="term" value="C:plasma membrane"/>
    <property type="evidence" value="ECO:0007669"/>
    <property type="project" value="UniProtKB-SubCell"/>
</dbReference>
<dbReference type="GO" id="GO:0015438">
    <property type="term" value="F:ABC-type teichoic acid transporter activity"/>
    <property type="evidence" value="ECO:0007669"/>
    <property type="project" value="UniProtKB-EC"/>
</dbReference>
<dbReference type="GO" id="GO:0005524">
    <property type="term" value="F:ATP binding"/>
    <property type="evidence" value="ECO:0007669"/>
    <property type="project" value="UniProtKB-KW"/>
</dbReference>
<dbReference type="GO" id="GO:0016887">
    <property type="term" value="F:ATP hydrolysis activity"/>
    <property type="evidence" value="ECO:0007669"/>
    <property type="project" value="InterPro"/>
</dbReference>
<dbReference type="CDD" id="cd03220">
    <property type="entry name" value="ABC_KpsT_Wzt"/>
    <property type="match status" value="1"/>
</dbReference>
<dbReference type="FunFam" id="3.40.50.300:FF:003010">
    <property type="entry name" value="Teichoic acids export ATP-binding protein TagH"/>
    <property type="match status" value="1"/>
</dbReference>
<dbReference type="Gene3D" id="3.40.50.300">
    <property type="entry name" value="P-loop containing nucleotide triphosphate hydrolases"/>
    <property type="match status" value="1"/>
</dbReference>
<dbReference type="InterPro" id="IPR003593">
    <property type="entry name" value="AAA+_ATPase"/>
</dbReference>
<dbReference type="InterPro" id="IPR003439">
    <property type="entry name" value="ABC_transporter-like_ATP-bd"/>
</dbReference>
<dbReference type="InterPro" id="IPR017871">
    <property type="entry name" value="ABC_transporter-like_CS"/>
</dbReference>
<dbReference type="InterPro" id="IPR015860">
    <property type="entry name" value="ABC_transpr_TagH-like"/>
</dbReference>
<dbReference type="InterPro" id="IPR050683">
    <property type="entry name" value="Bact_Polysacc_Export_ATP-bd"/>
</dbReference>
<dbReference type="InterPro" id="IPR027417">
    <property type="entry name" value="P-loop_NTPase"/>
</dbReference>
<dbReference type="PANTHER" id="PTHR46743">
    <property type="entry name" value="TEICHOIC ACIDS EXPORT ATP-BINDING PROTEIN TAGH"/>
    <property type="match status" value="1"/>
</dbReference>
<dbReference type="PANTHER" id="PTHR46743:SF2">
    <property type="entry name" value="TEICHOIC ACIDS EXPORT ATP-BINDING PROTEIN TAGH"/>
    <property type="match status" value="1"/>
</dbReference>
<dbReference type="Pfam" id="PF00005">
    <property type="entry name" value="ABC_tran"/>
    <property type="match status" value="1"/>
</dbReference>
<dbReference type="SMART" id="SM00382">
    <property type="entry name" value="AAA"/>
    <property type="match status" value="1"/>
</dbReference>
<dbReference type="SUPFAM" id="SSF52540">
    <property type="entry name" value="P-loop containing nucleoside triphosphate hydrolases"/>
    <property type="match status" value="1"/>
</dbReference>
<dbReference type="PROSITE" id="PS00211">
    <property type="entry name" value="ABC_TRANSPORTER_1"/>
    <property type="match status" value="1"/>
</dbReference>
<dbReference type="PROSITE" id="PS50893">
    <property type="entry name" value="ABC_TRANSPORTER_2"/>
    <property type="match status" value="1"/>
</dbReference>
<dbReference type="PROSITE" id="PS51251">
    <property type="entry name" value="TAGH"/>
    <property type="match status" value="1"/>
</dbReference>
<proteinExistence type="inferred from homology"/>
<sequence>MDNSYKIKVQHVTKEYDLYKSQAEKLRSFFSLSNSKVPHFWSLMGISLEVKAGETLGLIGVNGSGKSTLSNIISGIIPQTTGTVEVRGDTSIIAIGAGLRGNLTGLENIRLKALMQGLTNPEIDALMDDIVSFADIGDFLYQPVKSYSSGMKSRLGFSIAVHVNPDILIIDEALSVGDDTFYQKCVDKISEFKDEGKTIVFVSHSLKQIEILCDRVAWIHYGTLKEIGATETVVKHYREFTKWFKGQSKKEKKHFQRQMKANQKAFDIDAYQQQVIEERQANDPNDQNVAAEVKKDFYGSVISEKMSWGNRFLTIAVGIVFVLACLINVSGHSLGDVLQNPGNIVHPETVLHDTNATSGVK</sequence>
<protein>
    <recommendedName>
        <fullName evidence="1">Teichoic acids export ATP-binding protein TagH</fullName>
        <ecNumber evidence="1">7.5.2.4</ecNumber>
    </recommendedName>
</protein>
<reference key="1">
    <citation type="journal article" date="2006" name="Proc. Natl. Acad. Sci. U.S.A.">
        <title>Comparative genomics of the lactic acid bacteria.</title>
        <authorList>
            <person name="Makarova K.S."/>
            <person name="Slesarev A."/>
            <person name="Wolf Y.I."/>
            <person name="Sorokin A."/>
            <person name="Mirkin B."/>
            <person name="Koonin E.V."/>
            <person name="Pavlov A."/>
            <person name="Pavlova N."/>
            <person name="Karamychev V."/>
            <person name="Polouchine N."/>
            <person name="Shakhova V."/>
            <person name="Grigoriev I."/>
            <person name="Lou Y."/>
            <person name="Rohksar D."/>
            <person name="Lucas S."/>
            <person name="Huang K."/>
            <person name="Goodstein D.M."/>
            <person name="Hawkins T."/>
            <person name="Plengvidhya V."/>
            <person name="Welker D."/>
            <person name="Hughes J."/>
            <person name="Goh Y."/>
            <person name="Benson A."/>
            <person name="Baldwin K."/>
            <person name="Lee J.-H."/>
            <person name="Diaz-Muniz I."/>
            <person name="Dosti B."/>
            <person name="Smeianov V."/>
            <person name="Wechter W."/>
            <person name="Barabote R."/>
            <person name="Lorca G."/>
            <person name="Altermann E."/>
            <person name="Barrangou R."/>
            <person name="Ganesan B."/>
            <person name="Xie Y."/>
            <person name="Rawsthorne H."/>
            <person name="Tamir D."/>
            <person name="Parker C."/>
            <person name="Breidt F."/>
            <person name="Broadbent J.R."/>
            <person name="Hutkins R."/>
            <person name="O'Sullivan D."/>
            <person name="Steele J."/>
            <person name="Unlu G."/>
            <person name="Saier M.H. Jr."/>
            <person name="Klaenhammer T."/>
            <person name="Richardson P."/>
            <person name="Kozyavkin S."/>
            <person name="Weimer B.C."/>
            <person name="Mills D.A."/>
        </authorList>
    </citation>
    <scope>NUCLEOTIDE SEQUENCE [LARGE SCALE GENOMIC DNA]</scope>
    <source>
        <strain>ATCC 367 / BCRC 12310 / CIP 105137 / JCM 1170 / LMG 11437 / NCIMB 947 / NCTC 947</strain>
    </source>
</reference>
<name>TAGH_LEVBA</name>
<comment type="function">
    <text evidence="1">Part of the ABC transporter complex TagGH involved in teichoic acids export. Responsible for energy coupling to the transport system.</text>
</comment>
<comment type="catalytic activity">
    <reaction evidence="1">
        <text>ATP + H2O + teichoic acidSide 1 = ADP + phosphate + teichoic acidSide 2.</text>
        <dbReference type="EC" id="7.5.2.4"/>
    </reaction>
</comment>
<comment type="subunit">
    <text evidence="1">The complex is composed of two ATP-binding proteins (TagH) and two transmembrane proteins (TagG).</text>
</comment>
<comment type="subcellular location">
    <subcellularLocation>
        <location evidence="1">Cell membrane</location>
        <topology evidence="1">Peripheral membrane protein</topology>
    </subcellularLocation>
</comment>
<comment type="similarity">
    <text evidence="1">Belongs to the ABC transporter superfamily. Teichoic acids exporter (TC 3.A.1.104.1) family.</text>
</comment>
<organism>
    <name type="scientific">Levilactobacillus brevis (strain ATCC 367 / BCRC 12310 / CIP 105137 / JCM 1170 / LMG 11437 / NCIMB 947 / NCTC 947)</name>
    <name type="common">Lactobacillus brevis</name>
    <dbReference type="NCBI Taxonomy" id="387344"/>
    <lineage>
        <taxon>Bacteria</taxon>
        <taxon>Bacillati</taxon>
        <taxon>Bacillota</taxon>
        <taxon>Bacilli</taxon>
        <taxon>Lactobacillales</taxon>
        <taxon>Lactobacillaceae</taxon>
        <taxon>Levilactobacillus</taxon>
    </lineage>
</organism>
<evidence type="ECO:0000255" key="1">
    <source>
        <dbReference type="HAMAP-Rule" id="MF_01715"/>
    </source>
</evidence>
<keyword id="KW-0067">ATP-binding</keyword>
<keyword id="KW-1003">Cell membrane</keyword>
<keyword id="KW-0472">Membrane</keyword>
<keyword id="KW-0547">Nucleotide-binding</keyword>
<keyword id="KW-1185">Reference proteome</keyword>
<keyword id="KW-1278">Translocase</keyword>
<keyword id="KW-0813">Transport</keyword>
<gene>
    <name evidence="1" type="primary">tagH</name>
    <name type="ordered locus">LVIS_0694</name>
</gene>
<accession>Q03SI5</accession>
<feature type="chain" id="PRO_0000275849" description="Teichoic acids export ATP-binding protein TagH">
    <location>
        <begin position="1"/>
        <end position="361"/>
    </location>
</feature>
<feature type="domain" description="ABC transporter" evidence="1">
    <location>
        <begin position="13"/>
        <end position="246"/>
    </location>
</feature>
<feature type="region of interest" description="Unknown">
    <location>
        <begin position="247"/>
        <end position="361"/>
    </location>
</feature>
<feature type="binding site" evidence="1">
    <location>
        <begin position="60"/>
        <end position="67"/>
    </location>
    <ligand>
        <name>ATP</name>
        <dbReference type="ChEBI" id="CHEBI:30616"/>
    </ligand>
</feature>